<feature type="chain" id="PRO_1000214525" description="Large ribosomal subunit protein uL3">
    <location>
        <begin position="1"/>
        <end position="351"/>
    </location>
</feature>
<feature type="region of interest" description="Disordered" evidence="2">
    <location>
        <begin position="1"/>
        <end position="31"/>
    </location>
</feature>
<feature type="region of interest" description="Disordered" evidence="2">
    <location>
        <begin position="246"/>
        <end position="271"/>
    </location>
</feature>
<evidence type="ECO:0000255" key="1">
    <source>
        <dbReference type="HAMAP-Rule" id="MF_01325"/>
    </source>
</evidence>
<evidence type="ECO:0000256" key="2">
    <source>
        <dbReference type="SAM" id="MobiDB-lite"/>
    </source>
</evidence>
<evidence type="ECO:0000305" key="3"/>
<organism>
    <name type="scientific">Saccharolobus islandicus (strain Y.N.15.51 / Yellowstone #2)</name>
    <name type="common">Sulfolobus islandicus</name>
    <dbReference type="NCBI Taxonomy" id="419942"/>
    <lineage>
        <taxon>Archaea</taxon>
        <taxon>Thermoproteota</taxon>
        <taxon>Thermoprotei</taxon>
        <taxon>Sulfolobales</taxon>
        <taxon>Sulfolobaceae</taxon>
        <taxon>Saccharolobus</taxon>
    </lineage>
</organism>
<dbReference type="EMBL" id="CP001404">
    <property type="protein sequence ID" value="ACP48519.1"/>
    <property type="molecule type" value="Genomic_DNA"/>
</dbReference>
<dbReference type="RefSeq" id="WP_012713734.1">
    <property type="nucleotide sequence ID" value="NC_012623.1"/>
</dbReference>
<dbReference type="SMR" id="C3NHA9"/>
<dbReference type="GeneID" id="7809820"/>
<dbReference type="KEGG" id="sin:YN1551_1428"/>
<dbReference type="HOGENOM" id="CLU_033361_2_0_2"/>
<dbReference type="Proteomes" id="UP000006818">
    <property type="component" value="Chromosome"/>
</dbReference>
<dbReference type="GO" id="GO:0022625">
    <property type="term" value="C:cytosolic large ribosomal subunit"/>
    <property type="evidence" value="ECO:0007669"/>
    <property type="project" value="TreeGrafter"/>
</dbReference>
<dbReference type="GO" id="GO:0019843">
    <property type="term" value="F:rRNA binding"/>
    <property type="evidence" value="ECO:0007669"/>
    <property type="project" value="UniProtKB-UniRule"/>
</dbReference>
<dbReference type="GO" id="GO:0003735">
    <property type="term" value="F:structural constituent of ribosome"/>
    <property type="evidence" value="ECO:0007669"/>
    <property type="project" value="InterPro"/>
</dbReference>
<dbReference type="GO" id="GO:0006412">
    <property type="term" value="P:translation"/>
    <property type="evidence" value="ECO:0007669"/>
    <property type="project" value="UniProtKB-UniRule"/>
</dbReference>
<dbReference type="Gene3D" id="3.30.1430.10">
    <property type="match status" value="1"/>
</dbReference>
<dbReference type="Gene3D" id="4.10.960.10">
    <property type="entry name" value="Ribosomal protein L3, domain 3"/>
    <property type="match status" value="1"/>
</dbReference>
<dbReference type="Gene3D" id="2.40.30.10">
    <property type="entry name" value="Translation factors"/>
    <property type="match status" value="1"/>
</dbReference>
<dbReference type="HAMAP" id="MF_01325_A">
    <property type="entry name" value="Ribosomal_uL3_A"/>
    <property type="match status" value="1"/>
</dbReference>
<dbReference type="InterPro" id="IPR045077">
    <property type="entry name" value="L3_arc_euk"/>
</dbReference>
<dbReference type="InterPro" id="IPR044892">
    <property type="entry name" value="Ribosomal_L3_dom_3_arc_sf"/>
</dbReference>
<dbReference type="InterPro" id="IPR000597">
    <property type="entry name" value="Ribosomal_uL3"/>
</dbReference>
<dbReference type="InterPro" id="IPR019928">
    <property type="entry name" value="Ribosomal_uL3_arc"/>
</dbReference>
<dbReference type="InterPro" id="IPR019926">
    <property type="entry name" value="Ribosomal_uL3_CS"/>
</dbReference>
<dbReference type="InterPro" id="IPR009000">
    <property type="entry name" value="Transl_B-barrel_sf"/>
</dbReference>
<dbReference type="NCBIfam" id="TIGR03626">
    <property type="entry name" value="L3_arch"/>
    <property type="match status" value="1"/>
</dbReference>
<dbReference type="NCBIfam" id="NF003261">
    <property type="entry name" value="PRK04231.1"/>
    <property type="match status" value="1"/>
</dbReference>
<dbReference type="PANTHER" id="PTHR11363">
    <property type="entry name" value="60S RIBOSOMAL PROTEIN L3-RELATED"/>
    <property type="match status" value="1"/>
</dbReference>
<dbReference type="PANTHER" id="PTHR11363:SF5">
    <property type="entry name" value="LARGE RIBOSOMAL SUBUNIT PROTEIN UL3"/>
    <property type="match status" value="1"/>
</dbReference>
<dbReference type="Pfam" id="PF00297">
    <property type="entry name" value="Ribosomal_L3"/>
    <property type="match status" value="1"/>
</dbReference>
<dbReference type="SUPFAM" id="SSF50447">
    <property type="entry name" value="Translation proteins"/>
    <property type="match status" value="1"/>
</dbReference>
<dbReference type="PROSITE" id="PS00474">
    <property type="entry name" value="RIBOSOMAL_L3"/>
    <property type="match status" value="1"/>
</dbReference>
<protein>
    <recommendedName>
        <fullName evidence="1">Large ribosomal subunit protein uL3</fullName>
    </recommendedName>
    <alternativeName>
        <fullName evidence="3">50S ribosomal protein L3</fullName>
    </alternativeName>
</protein>
<reference key="1">
    <citation type="journal article" date="2009" name="Proc. Natl. Acad. Sci. U.S.A.">
        <title>Biogeography of the Sulfolobus islandicus pan-genome.</title>
        <authorList>
            <person name="Reno M.L."/>
            <person name="Held N.L."/>
            <person name="Fields C.J."/>
            <person name="Burke P.V."/>
            <person name="Whitaker R.J."/>
        </authorList>
    </citation>
    <scope>NUCLEOTIDE SEQUENCE [LARGE SCALE GENOMIC DNA]</scope>
    <source>
        <strain>Y.N.15.51 / Yellowstone #2</strain>
    </source>
</reference>
<keyword id="KW-0687">Ribonucleoprotein</keyword>
<keyword id="KW-0689">Ribosomal protein</keyword>
<keyword id="KW-0694">RNA-binding</keyword>
<keyword id="KW-0699">rRNA-binding</keyword>
<accession>C3NHA9</accession>
<comment type="function">
    <text evidence="1">One of the primary rRNA binding proteins, it binds directly near the 3'-end of the 23S rRNA, where it nucleates assembly of the 50S subunit.</text>
</comment>
<comment type="subunit">
    <text evidence="1">Part of the 50S ribosomal subunit. Forms a cluster with proteins L14 and L24e.</text>
</comment>
<comment type="similarity">
    <text evidence="1">Belongs to the universal ribosomal protein uL3 family.</text>
</comment>
<proteinExistence type="inferred from homology"/>
<gene>
    <name evidence="1" type="primary">rpl3</name>
    <name type="ordered locus">YN1551_1428</name>
</gene>
<name>RL3_SACI1</name>
<sequence>MGHRKLASPRRGSAGLRPRKRSSELLPTPRTWPQINSPNPKLLGFVGYKVGMSHVFMIDDWPNSPTNGKEIYMPVTVLEVPPIIPLALRAYAVDGKGEPNVITEYWSPSSLQFLDITRRIHSLSSFLKNDESKKKFEEKFGSKLDLIKSNLDRIVYFRLLVATQPRKIPSLGKKVPDLVEIQIGGGEKKAQLDYALNVLGKEISIKDVFKEGQLIDVVGVTKGKGFAGVIKRYSVVELPRWHKHRKGSRKIGTRGPSLGTPSYTPQPGQLGFHRRTEYNKRIIKIGDDPKEINPAGGFVRYGIVRNTYILLEGSILGSKKRPIFLREAVRPSYVFENAPKITYVNLLSKQG</sequence>